<organism>
    <name type="scientific">Ralstonia pickettii (strain 12J)</name>
    <dbReference type="NCBI Taxonomy" id="402626"/>
    <lineage>
        <taxon>Bacteria</taxon>
        <taxon>Pseudomonadati</taxon>
        <taxon>Pseudomonadota</taxon>
        <taxon>Betaproteobacteria</taxon>
        <taxon>Burkholderiales</taxon>
        <taxon>Burkholderiaceae</taxon>
        <taxon>Ralstonia</taxon>
    </lineage>
</organism>
<comment type="similarity">
    <text evidence="1">Belongs to the UPF0246 family.</text>
</comment>
<feature type="chain" id="PRO_1000131135" description="UPF0246 protein Rpic_2164">
    <location>
        <begin position="1"/>
        <end position="257"/>
    </location>
</feature>
<evidence type="ECO:0000255" key="1">
    <source>
        <dbReference type="HAMAP-Rule" id="MF_00652"/>
    </source>
</evidence>
<protein>
    <recommendedName>
        <fullName evidence="1">UPF0246 protein Rpic_2164</fullName>
    </recommendedName>
</protein>
<gene>
    <name type="ordered locus">Rpic_2164</name>
</gene>
<name>Y2164_RALPJ</name>
<sequence>MIIVLSPAKSLDYDTPPRTKTHTLPDFIERSAELIDVLRKLSPAQIGTLMHISDPLAALNATRYADWSPEFTAENSKQAALAFDGDVYGGLDANSLAVDDLQFAQKHLRILSGLYGVLRPLDWMQPYRLEMGTRLANPRGKDLYAFWGDDVTLALNELFKQDDDAVLVNLASEEYFKVVRPKVLKARIVTPVFEDWKNGQYKIISFYAKRARGLMARYAIEHRITDPRKLKAFDVDGYAFAAADSDDERWVFRRKLT</sequence>
<proteinExistence type="inferred from homology"/>
<accession>B2U7L1</accession>
<reference key="1">
    <citation type="submission" date="2008-05" db="EMBL/GenBank/DDBJ databases">
        <title>Complete sequence of chromosome 1 of Ralstonia pickettii 12J.</title>
        <authorList>
            <person name="Lucas S."/>
            <person name="Copeland A."/>
            <person name="Lapidus A."/>
            <person name="Glavina del Rio T."/>
            <person name="Dalin E."/>
            <person name="Tice H."/>
            <person name="Bruce D."/>
            <person name="Goodwin L."/>
            <person name="Pitluck S."/>
            <person name="Meincke L."/>
            <person name="Brettin T."/>
            <person name="Detter J.C."/>
            <person name="Han C."/>
            <person name="Kuske C.R."/>
            <person name="Schmutz J."/>
            <person name="Larimer F."/>
            <person name="Land M."/>
            <person name="Hauser L."/>
            <person name="Kyrpides N."/>
            <person name="Mikhailova N."/>
            <person name="Marsh T."/>
            <person name="Richardson P."/>
        </authorList>
    </citation>
    <scope>NUCLEOTIDE SEQUENCE [LARGE SCALE GENOMIC DNA]</scope>
    <source>
        <strain>12J</strain>
    </source>
</reference>
<dbReference type="EMBL" id="CP001068">
    <property type="protein sequence ID" value="ACD27298.1"/>
    <property type="molecule type" value="Genomic_DNA"/>
</dbReference>
<dbReference type="SMR" id="B2U7L1"/>
<dbReference type="STRING" id="402626.Rpic_2164"/>
<dbReference type="KEGG" id="rpi:Rpic_2164"/>
<dbReference type="PATRIC" id="fig|402626.5.peg.3311"/>
<dbReference type="eggNOG" id="COG3022">
    <property type="taxonomic scope" value="Bacteria"/>
</dbReference>
<dbReference type="HOGENOM" id="CLU_061989_0_0_4"/>
<dbReference type="GO" id="GO:0005829">
    <property type="term" value="C:cytosol"/>
    <property type="evidence" value="ECO:0007669"/>
    <property type="project" value="TreeGrafter"/>
</dbReference>
<dbReference type="GO" id="GO:0033194">
    <property type="term" value="P:response to hydroperoxide"/>
    <property type="evidence" value="ECO:0007669"/>
    <property type="project" value="TreeGrafter"/>
</dbReference>
<dbReference type="HAMAP" id="MF_00652">
    <property type="entry name" value="UPF0246"/>
    <property type="match status" value="1"/>
</dbReference>
<dbReference type="InterPro" id="IPR005583">
    <property type="entry name" value="YaaA"/>
</dbReference>
<dbReference type="NCBIfam" id="NF002541">
    <property type="entry name" value="PRK02101.1-1"/>
    <property type="match status" value="1"/>
</dbReference>
<dbReference type="NCBIfam" id="NF002542">
    <property type="entry name" value="PRK02101.1-3"/>
    <property type="match status" value="1"/>
</dbReference>
<dbReference type="PANTHER" id="PTHR30283:SF4">
    <property type="entry name" value="PEROXIDE STRESS RESISTANCE PROTEIN YAAA"/>
    <property type="match status" value="1"/>
</dbReference>
<dbReference type="PANTHER" id="PTHR30283">
    <property type="entry name" value="PEROXIDE STRESS RESPONSE PROTEIN YAAA"/>
    <property type="match status" value="1"/>
</dbReference>
<dbReference type="Pfam" id="PF03883">
    <property type="entry name" value="H2O2_YaaD"/>
    <property type="match status" value="1"/>
</dbReference>